<sequence length="138" mass="16144">MIKCTRRIEFDAGHRIIEHQNKCQFLHGHRYVLEIAIAANKTDKLGMVIDFGLIKDLAKKWIDENFDHSLILHQDDKEMGQQIENCTGQKIYYMQNNPTAENIATHLKNEIFPKLFVSQNFFVTSLKLYETPNCFVEV</sequence>
<keyword id="KW-0456">Lyase</keyword>
<keyword id="KW-0479">Metal-binding</keyword>
<keyword id="KW-0671">Queuosine biosynthesis</keyword>
<keyword id="KW-0862">Zinc</keyword>
<feature type="chain" id="PRO_0000272630" description="6-carboxy-5,6,7,8-tetrahydropterin synthase">
    <location>
        <begin position="1"/>
        <end position="138"/>
    </location>
</feature>
<feature type="active site" description="Proton acceptor" evidence="1">
    <location>
        <position position="23"/>
    </location>
</feature>
<feature type="active site" description="Charge relay system" evidence="1">
    <location>
        <position position="68"/>
    </location>
</feature>
<feature type="active site" description="Charge relay system" evidence="1">
    <location>
        <position position="130"/>
    </location>
</feature>
<feature type="binding site" evidence="1">
    <location>
        <position position="14"/>
    </location>
    <ligand>
        <name>Zn(2+)</name>
        <dbReference type="ChEBI" id="CHEBI:29105"/>
    </ligand>
</feature>
<feature type="binding site" evidence="1">
    <location>
        <position position="27"/>
    </location>
    <ligand>
        <name>Zn(2+)</name>
        <dbReference type="ChEBI" id="CHEBI:29105"/>
    </ligand>
</feature>
<feature type="binding site" evidence="1">
    <location>
        <position position="29"/>
    </location>
    <ligand>
        <name>Zn(2+)</name>
        <dbReference type="ChEBI" id="CHEBI:29105"/>
    </ligand>
</feature>
<reference key="1">
    <citation type="journal article" date="2001" name="Science">
        <title>Mechanisms of evolution in Rickettsia conorii and R. prowazekii.</title>
        <authorList>
            <person name="Ogata H."/>
            <person name="Audic S."/>
            <person name="Renesto-Audiffren P."/>
            <person name="Fournier P.-E."/>
            <person name="Barbe V."/>
            <person name="Samson D."/>
            <person name="Roux V."/>
            <person name="Cossart P."/>
            <person name="Weissenbach J."/>
            <person name="Claverie J.-M."/>
            <person name="Raoult D."/>
        </authorList>
    </citation>
    <scope>NUCLEOTIDE SEQUENCE [LARGE SCALE GENOMIC DNA]</scope>
    <source>
        <strain>ATCC VR-613 / Malish 7</strain>
    </source>
</reference>
<name>QUED_RICCN</name>
<organism>
    <name type="scientific">Rickettsia conorii (strain ATCC VR-613 / Malish 7)</name>
    <dbReference type="NCBI Taxonomy" id="272944"/>
    <lineage>
        <taxon>Bacteria</taxon>
        <taxon>Pseudomonadati</taxon>
        <taxon>Pseudomonadota</taxon>
        <taxon>Alphaproteobacteria</taxon>
        <taxon>Rickettsiales</taxon>
        <taxon>Rickettsiaceae</taxon>
        <taxon>Rickettsieae</taxon>
        <taxon>Rickettsia</taxon>
        <taxon>spotted fever group</taxon>
    </lineage>
</organism>
<protein>
    <recommendedName>
        <fullName>6-carboxy-5,6,7,8-tetrahydropterin synthase</fullName>
        <shortName>CPH4 synthase</shortName>
        <ecNumber>4.1.2.50</ecNumber>
    </recommendedName>
    <alternativeName>
        <fullName>Queuosine biosynthesis protein QueD</fullName>
    </alternativeName>
</protein>
<gene>
    <name type="primary">queD</name>
    <name type="ordered locus">RC0225</name>
</gene>
<accession>Q92J44</accession>
<proteinExistence type="inferred from homology"/>
<comment type="function">
    <text evidence="1">Catalyzes the conversion of 7,8-dihydroneopterin triphosphate (H2NTP) to 6-carboxy-5,6,7,8-tetrahydropterin (CPH4) and acetaldehyde.</text>
</comment>
<comment type="catalytic activity">
    <reaction>
        <text>7,8-dihydroneopterin 3'-triphosphate + H2O = 6-carboxy-5,6,7,8-tetrahydropterin + triphosphate + acetaldehyde + 2 H(+)</text>
        <dbReference type="Rhea" id="RHEA:27966"/>
        <dbReference type="ChEBI" id="CHEBI:15343"/>
        <dbReference type="ChEBI" id="CHEBI:15377"/>
        <dbReference type="ChEBI" id="CHEBI:15378"/>
        <dbReference type="ChEBI" id="CHEBI:18036"/>
        <dbReference type="ChEBI" id="CHEBI:58462"/>
        <dbReference type="ChEBI" id="CHEBI:61032"/>
        <dbReference type="EC" id="4.1.2.50"/>
    </reaction>
</comment>
<comment type="cofactor">
    <cofactor evidence="1">
        <name>Zn(2+)</name>
        <dbReference type="ChEBI" id="CHEBI:29105"/>
    </cofactor>
    <text evidence="1">Binds 1 zinc ion per subunit.</text>
</comment>
<comment type="pathway">
    <text>Purine metabolism; 7-cyano-7-deazaguanine biosynthesis.</text>
</comment>
<comment type="miscellaneous">
    <text evidence="1">The active site is at the interface between 2 subunits. The proton acceptor Cys is on one subunit, and the charge relay system is on the other subunit (By similarity).</text>
</comment>
<comment type="similarity">
    <text evidence="2">Belongs to the PTPS family. QueD subfamily.</text>
</comment>
<comment type="sequence caution" evidence="2">
    <conflict type="erroneous initiation">
        <sequence resource="EMBL-CDS" id="AAL02763"/>
    </conflict>
</comment>
<evidence type="ECO:0000250" key="1"/>
<evidence type="ECO:0000305" key="2"/>
<dbReference type="EC" id="4.1.2.50"/>
<dbReference type="EMBL" id="AE006914">
    <property type="protein sequence ID" value="AAL02763.1"/>
    <property type="status" value="ALT_INIT"/>
    <property type="molecule type" value="Genomic_DNA"/>
</dbReference>
<dbReference type="PIR" id="A97728">
    <property type="entry name" value="A97728"/>
</dbReference>
<dbReference type="RefSeq" id="WP_004996555.1">
    <property type="nucleotide sequence ID" value="NC_003103.1"/>
</dbReference>
<dbReference type="SMR" id="Q92J44"/>
<dbReference type="KEGG" id="rco:RC0225"/>
<dbReference type="HOGENOM" id="CLU_111016_1_1_5"/>
<dbReference type="UniPathway" id="UPA00391"/>
<dbReference type="Proteomes" id="UP000000816">
    <property type="component" value="Chromosome"/>
</dbReference>
<dbReference type="GO" id="GO:0070497">
    <property type="term" value="F:6-carboxytetrahydropterin synthase activity"/>
    <property type="evidence" value="ECO:0007669"/>
    <property type="project" value="UniProtKB-EC"/>
</dbReference>
<dbReference type="GO" id="GO:0046872">
    <property type="term" value="F:metal ion binding"/>
    <property type="evidence" value="ECO:0007669"/>
    <property type="project" value="UniProtKB-KW"/>
</dbReference>
<dbReference type="GO" id="GO:0008616">
    <property type="term" value="P:queuosine biosynthetic process"/>
    <property type="evidence" value="ECO:0007669"/>
    <property type="project" value="UniProtKB-KW"/>
</dbReference>
<dbReference type="Gene3D" id="3.30.479.10">
    <property type="entry name" value="6-pyruvoyl tetrahydropterin synthase/QueD"/>
    <property type="match status" value="1"/>
</dbReference>
<dbReference type="InterPro" id="IPR007115">
    <property type="entry name" value="6-PTP_synth/QueD"/>
</dbReference>
<dbReference type="InterPro" id="IPR038418">
    <property type="entry name" value="6-PTP_synth/QueD_sf"/>
</dbReference>
<dbReference type="PANTHER" id="PTHR12589:SF7">
    <property type="entry name" value="6-PYRUVOYL TETRAHYDROBIOPTERIN SYNTHASE"/>
    <property type="match status" value="1"/>
</dbReference>
<dbReference type="PANTHER" id="PTHR12589">
    <property type="entry name" value="PYRUVOYL TETRAHYDROBIOPTERIN SYNTHASE"/>
    <property type="match status" value="1"/>
</dbReference>
<dbReference type="Pfam" id="PF01242">
    <property type="entry name" value="PTPS"/>
    <property type="match status" value="1"/>
</dbReference>
<dbReference type="SUPFAM" id="SSF55620">
    <property type="entry name" value="Tetrahydrobiopterin biosynthesis enzymes-like"/>
    <property type="match status" value="1"/>
</dbReference>